<evidence type="ECO:0000255" key="1">
    <source>
        <dbReference type="HAMAP-Rule" id="MF_00072"/>
    </source>
</evidence>
<name>RF3_PSEF5</name>
<proteinExistence type="inferred from homology"/>
<comment type="function">
    <text evidence="1">Increases the formation of ribosomal termination complexes and stimulates activities of RF-1 and RF-2. It binds guanine nucleotides and has strong preference for UGA stop codons. It may interact directly with the ribosome. The stimulation of RF-1 and RF-2 is significantly reduced by GTP and GDP, but not by GMP.</text>
</comment>
<comment type="subcellular location">
    <subcellularLocation>
        <location evidence="1">Cytoplasm</location>
    </subcellularLocation>
</comment>
<comment type="similarity">
    <text evidence="1">Belongs to the TRAFAC class translation factor GTPase superfamily. Classic translation factor GTPase family. PrfC subfamily.</text>
</comment>
<accession>Q4KIC9</accession>
<feature type="chain" id="PRO_0000242196" description="Peptide chain release factor 3">
    <location>
        <begin position="1"/>
        <end position="527"/>
    </location>
</feature>
<feature type="domain" description="tr-type G">
    <location>
        <begin position="9"/>
        <end position="277"/>
    </location>
</feature>
<feature type="binding site" evidence="1">
    <location>
        <begin position="18"/>
        <end position="25"/>
    </location>
    <ligand>
        <name>GTP</name>
        <dbReference type="ChEBI" id="CHEBI:37565"/>
    </ligand>
</feature>
<feature type="binding site" evidence="1">
    <location>
        <begin position="86"/>
        <end position="90"/>
    </location>
    <ligand>
        <name>GTP</name>
        <dbReference type="ChEBI" id="CHEBI:37565"/>
    </ligand>
</feature>
<feature type="binding site" evidence="1">
    <location>
        <begin position="140"/>
        <end position="143"/>
    </location>
    <ligand>
        <name>GTP</name>
        <dbReference type="ChEBI" id="CHEBI:37565"/>
    </ligand>
</feature>
<organism>
    <name type="scientific">Pseudomonas fluorescens (strain ATCC BAA-477 / NRRL B-23932 / Pf-5)</name>
    <dbReference type="NCBI Taxonomy" id="220664"/>
    <lineage>
        <taxon>Bacteria</taxon>
        <taxon>Pseudomonadati</taxon>
        <taxon>Pseudomonadota</taxon>
        <taxon>Gammaproteobacteria</taxon>
        <taxon>Pseudomonadales</taxon>
        <taxon>Pseudomonadaceae</taxon>
        <taxon>Pseudomonas</taxon>
    </lineage>
</organism>
<sequence length="527" mass="59590">MTQQAAEVAKRRTFAIISHPDAGKTTITEKLLLMGKAIAVAGTVKSRKSDRHATSDWMEMEKQRGISITTSVMQFPYREHMINLLDTPGHEDFSEDTYRTLTAVDSALMVLDGGKGVEPRTIALMDVCRLRDTPIVSFINKLDRDIRDPIELLDEIEAVLKIKAAPITWPIGCYRDFKGVYHLAGDYIIVYTPGHGHERTETKIIEKLDSAEARAHLGDEYERFIEQLELVQGACHEFNQQEFLDGQLTPVFFGTALGNFGVDHVLDAVVDWAPLPLARVANERSVAPQEEKFSGFIFKIQANMDPKHRDRIAFMRICSGKYEKGMKMRHVRTGKDVRIGDALTFFSSEREQLEEAYAGDIIGLHNHGTIQIGDTFTEGEALGFTGIPHFAPELFRRVRLKDPLKSKQLRQGLQQLAEEGATQVFFPERSNDIILGAVGVLQFDVVASRLKEEYKVECSYEPITVWSARWIECSDKKKLEEFSNKAVENLALDGGGHLTYLAPTRVNLALMEERWPDVKFRATREHH</sequence>
<dbReference type="EMBL" id="CP000076">
    <property type="protein sequence ID" value="AAY90160.1"/>
    <property type="molecule type" value="Genomic_DNA"/>
</dbReference>
<dbReference type="RefSeq" id="WP_011059228.1">
    <property type="nucleotide sequence ID" value="NC_004129.6"/>
</dbReference>
<dbReference type="SMR" id="Q4KIC9"/>
<dbReference type="STRING" id="220664.PFL_0872"/>
<dbReference type="KEGG" id="pfl:PFL_0872"/>
<dbReference type="PATRIC" id="fig|220664.5.peg.892"/>
<dbReference type="eggNOG" id="COG4108">
    <property type="taxonomic scope" value="Bacteria"/>
</dbReference>
<dbReference type="HOGENOM" id="CLU_002794_2_1_6"/>
<dbReference type="Proteomes" id="UP000008540">
    <property type="component" value="Chromosome"/>
</dbReference>
<dbReference type="GO" id="GO:0005829">
    <property type="term" value="C:cytosol"/>
    <property type="evidence" value="ECO:0007669"/>
    <property type="project" value="TreeGrafter"/>
</dbReference>
<dbReference type="GO" id="GO:0005525">
    <property type="term" value="F:GTP binding"/>
    <property type="evidence" value="ECO:0007669"/>
    <property type="project" value="UniProtKB-UniRule"/>
</dbReference>
<dbReference type="GO" id="GO:0003924">
    <property type="term" value="F:GTPase activity"/>
    <property type="evidence" value="ECO:0007669"/>
    <property type="project" value="InterPro"/>
</dbReference>
<dbReference type="GO" id="GO:0097216">
    <property type="term" value="F:guanosine tetraphosphate binding"/>
    <property type="evidence" value="ECO:0007669"/>
    <property type="project" value="UniProtKB-ARBA"/>
</dbReference>
<dbReference type="GO" id="GO:0016150">
    <property type="term" value="F:translation release factor activity, codon nonspecific"/>
    <property type="evidence" value="ECO:0007669"/>
    <property type="project" value="TreeGrafter"/>
</dbReference>
<dbReference type="GO" id="GO:0016149">
    <property type="term" value="F:translation release factor activity, codon specific"/>
    <property type="evidence" value="ECO:0007669"/>
    <property type="project" value="UniProtKB-UniRule"/>
</dbReference>
<dbReference type="GO" id="GO:0006449">
    <property type="term" value="P:regulation of translational termination"/>
    <property type="evidence" value="ECO:0007669"/>
    <property type="project" value="UniProtKB-UniRule"/>
</dbReference>
<dbReference type="CDD" id="cd04169">
    <property type="entry name" value="RF3"/>
    <property type="match status" value="1"/>
</dbReference>
<dbReference type="CDD" id="cd03689">
    <property type="entry name" value="RF3_II"/>
    <property type="match status" value="1"/>
</dbReference>
<dbReference type="CDD" id="cd16259">
    <property type="entry name" value="RF3_III"/>
    <property type="match status" value="1"/>
</dbReference>
<dbReference type="FunFam" id="2.40.30.10:FF:000040">
    <property type="entry name" value="Peptide chain release factor 3"/>
    <property type="match status" value="1"/>
</dbReference>
<dbReference type="FunFam" id="3.30.70.3280:FF:000001">
    <property type="entry name" value="Peptide chain release factor 3"/>
    <property type="match status" value="1"/>
</dbReference>
<dbReference type="FunFam" id="3.40.50.300:FF:000542">
    <property type="entry name" value="Peptide chain release factor 3"/>
    <property type="match status" value="1"/>
</dbReference>
<dbReference type="Gene3D" id="3.40.50.300">
    <property type="entry name" value="P-loop containing nucleotide triphosphate hydrolases"/>
    <property type="match status" value="2"/>
</dbReference>
<dbReference type="Gene3D" id="3.30.70.3280">
    <property type="entry name" value="Peptide chain release factor 3, domain III"/>
    <property type="match status" value="1"/>
</dbReference>
<dbReference type="HAMAP" id="MF_00072">
    <property type="entry name" value="Rel_fac_3"/>
    <property type="match status" value="1"/>
</dbReference>
<dbReference type="InterPro" id="IPR053905">
    <property type="entry name" value="EF-G-like_DII"/>
</dbReference>
<dbReference type="InterPro" id="IPR035647">
    <property type="entry name" value="EFG_III/V"/>
</dbReference>
<dbReference type="InterPro" id="IPR031157">
    <property type="entry name" value="G_TR_CS"/>
</dbReference>
<dbReference type="InterPro" id="IPR027417">
    <property type="entry name" value="P-loop_NTPase"/>
</dbReference>
<dbReference type="InterPro" id="IPR004548">
    <property type="entry name" value="PrfC"/>
</dbReference>
<dbReference type="InterPro" id="IPR032090">
    <property type="entry name" value="RF3_C"/>
</dbReference>
<dbReference type="InterPro" id="IPR038467">
    <property type="entry name" value="RF3_dom_3_sf"/>
</dbReference>
<dbReference type="InterPro" id="IPR041732">
    <property type="entry name" value="RF3_GTP-bd"/>
</dbReference>
<dbReference type="InterPro" id="IPR005225">
    <property type="entry name" value="Small_GTP-bd"/>
</dbReference>
<dbReference type="InterPro" id="IPR000795">
    <property type="entry name" value="T_Tr_GTP-bd_dom"/>
</dbReference>
<dbReference type="InterPro" id="IPR009000">
    <property type="entry name" value="Transl_B-barrel_sf"/>
</dbReference>
<dbReference type="NCBIfam" id="TIGR00503">
    <property type="entry name" value="prfC"/>
    <property type="match status" value="1"/>
</dbReference>
<dbReference type="NCBIfam" id="NF001964">
    <property type="entry name" value="PRK00741.1"/>
    <property type="match status" value="1"/>
</dbReference>
<dbReference type="NCBIfam" id="TIGR00231">
    <property type="entry name" value="small_GTP"/>
    <property type="match status" value="1"/>
</dbReference>
<dbReference type="PANTHER" id="PTHR43556">
    <property type="entry name" value="PEPTIDE CHAIN RELEASE FACTOR RF3"/>
    <property type="match status" value="1"/>
</dbReference>
<dbReference type="PANTHER" id="PTHR43556:SF2">
    <property type="entry name" value="PEPTIDE CHAIN RELEASE FACTOR RF3"/>
    <property type="match status" value="1"/>
</dbReference>
<dbReference type="Pfam" id="PF22042">
    <property type="entry name" value="EF-G_D2"/>
    <property type="match status" value="1"/>
</dbReference>
<dbReference type="Pfam" id="PF00009">
    <property type="entry name" value="GTP_EFTU"/>
    <property type="match status" value="1"/>
</dbReference>
<dbReference type="Pfam" id="PF16658">
    <property type="entry name" value="RF3_C"/>
    <property type="match status" value="1"/>
</dbReference>
<dbReference type="PRINTS" id="PR00315">
    <property type="entry name" value="ELONGATNFCT"/>
</dbReference>
<dbReference type="SUPFAM" id="SSF54980">
    <property type="entry name" value="EF-G C-terminal domain-like"/>
    <property type="match status" value="1"/>
</dbReference>
<dbReference type="SUPFAM" id="SSF52540">
    <property type="entry name" value="P-loop containing nucleoside triphosphate hydrolases"/>
    <property type="match status" value="1"/>
</dbReference>
<dbReference type="SUPFAM" id="SSF50447">
    <property type="entry name" value="Translation proteins"/>
    <property type="match status" value="1"/>
</dbReference>
<dbReference type="PROSITE" id="PS00301">
    <property type="entry name" value="G_TR_1"/>
    <property type="match status" value="1"/>
</dbReference>
<dbReference type="PROSITE" id="PS51722">
    <property type="entry name" value="G_TR_2"/>
    <property type="match status" value="1"/>
</dbReference>
<protein>
    <recommendedName>
        <fullName evidence="1">Peptide chain release factor 3</fullName>
        <shortName evidence="1">RF-3</shortName>
    </recommendedName>
</protein>
<reference key="1">
    <citation type="journal article" date="2005" name="Nat. Biotechnol.">
        <title>Complete genome sequence of the plant commensal Pseudomonas fluorescens Pf-5.</title>
        <authorList>
            <person name="Paulsen I.T."/>
            <person name="Press C.M."/>
            <person name="Ravel J."/>
            <person name="Kobayashi D.Y."/>
            <person name="Myers G.S.A."/>
            <person name="Mavrodi D.V."/>
            <person name="DeBoy R.T."/>
            <person name="Seshadri R."/>
            <person name="Ren Q."/>
            <person name="Madupu R."/>
            <person name="Dodson R.J."/>
            <person name="Durkin A.S."/>
            <person name="Brinkac L.M."/>
            <person name="Daugherty S.C."/>
            <person name="Sullivan S.A."/>
            <person name="Rosovitz M.J."/>
            <person name="Gwinn M.L."/>
            <person name="Zhou L."/>
            <person name="Schneider D.J."/>
            <person name="Cartinhour S.W."/>
            <person name="Nelson W.C."/>
            <person name="Weidman J."/>
            <person name="Watkins K."/>
            <person name="Tran K."/>
            <person name="Khouri H."/>
            <person name="Pierson E.A."/>
            <person name="Pierson L.S. III"/>
            <person name="Thomashow L.S."/>
            <person name="Loper J.E."/>
        </authorList>
    </citation>
    <scope>NUCLEOTIDE SEQUENCE [LARGE SCALE GENOMIC DNA]</scope>
    <source>
        <strain>ATCC BAA-477 / NRRL B-23932 / Pf-5</strain>
    </source>
</reference>
<gene>
    <name evidence="1" type="primary">prfC</name>
    <name type="ordered locus">PFL_0872</name>
</gene>
<keyword id="KW-0963">Cytoplasm</keyword>
<keyword id="KW-0342">GTP-binding</keyword>
<keyword id="KW-0547">Nucleotide-binding</keyword>
<keyword id="KW-0648">Protein biosynthesis</keyword>